<proteinExistence type="inferred from homology"/>
<gene>
    <name evidence="1" type="primary">rpsH</name>
    <name type="ordered locus">XOO3373</name>
</gene>
<protein>
    <recommendedName>
        <fullName evidence="1">Small ribosomal subunit protein uS8</fullName>
    </recommendedName>
    <alternativeName>
        <fullName evidence="2">30S ribosomal protein S8</fullName>
    </alternativeName>
</protein>
<reference key="1">
    <citation type="journal article" date="2005" name="Jpn. Agric. Res. Q.">
        <title>Genome sequence of Xanthomonas oryzae pv. oryzae suggests contribution of large numbers of effector genes and insertion sequences to its race diversity.</title>
        <authorList>
            <person name="Ochiai H."/>
            <person name="Inoue Y."/>
            <person name="Takeya M."/>
            <person name="Sasaki A."/>
            <person name="Kaku H."/>
        </authorList>
    </citation>
    <scope>NUCLEOTIDE SEQUENCE [LARGE SCALE GENOMIC DNA]</scope>
    <source>
        <strain>MAFF 311018</strain>
    </source>
</reference>
<sequence>MSMTDPIADLLVRIKNAAAVGKPTVKLPSSKIKVAIAQVLKDEGYITDLRVTATENNKSELEIVLKYFEGRPVIETLKRFSRSGLRQYRGKTELPKVLGGLGIAIISTSKGIMTDAQAREAGVGGEVLCFVA</sequence>
<keyword id="KW-0687">Ribonucleoprotein</keyword>
<keyword id="KW-0689">Ribosomal protein</keyword>
<keyword id="KW-0694">RNA-binding</keyword>
<keyword id="KW-0699">rRNA-binding</keyword>
<comment type="function">
    <text evidence="1">One of the primary rRNA binding proteins, it binds directly to 16S rRNA central domain where it helps coordinate assembly of the platform of the 30S subunit.</text>
</comment>
<comment type="subunit">
    <text evidence="1">Part of the 30S ribosomal subunit. Contacts proteins S5 and S12.</text>
</comment>
<comment type="similarity">
    <text evidence="1">Belongs to the universal ribosomal protein uS8 family.</text>
</comment>
<accession>Q2NZZ9</accession>
<organism>
    <name type="scientific">Xanthomonas oryzae pv. oryzae (strain MAFF 311018)</name>
    <dbReference type="NCBI Taxonomy" id="342109"/>
    <lineage>
        <taxon>Bacteria</taxon>
        <taxon>Pseudomonadati</taxon>
        <taxon>Pseudomonadota</taxon>
        <taxon>Gammaproteobacteria</taxon>
        <taxon>Lysobacterales</taxon>
        <taxon>Lysobacteraceae</taxon>
        <taxon>Xanthomonas</taxon>
    </lineage>
</organism>
<evidence type="ECO:0000255" key="1">
    <source>
        <dbReference type="HAMAP-Rule" id="MF_01302"/>
    </source>
</evidence>
<evidence type="ECO:0000305" key="2"/>
<name>RS8_XANOM</name>
<dbReference type="EMBL" id="AP008229">
    <property type="protein sequence ID" value="BAE70128.1"/>
    <property type="molecule type" value="Genomic_DNA"/>
</dbReference>
<dbReference type="RefSeq" id="WP_011260023.1">
    <property type="nucleotide sequence ID" value="NC_007705.1"/>
</dbReference>
<dbReference type="SMR" id="Q2NZZ9"/>
<dbReference type="KEGG" id="xom:XOO3373"/>
<dbReference type="HOGENOM" id="CLU_098428_0_0_6"/>
<dbReference type="GO" id="GO:1990904">
    <property type="term" value="C:ribonucleoprotein complex"/>
    <property type="evidence" value="ECO:0007669"/>
    <property type="project" value="UniProtKB-KW"/>
</dbReference>
<dbReference type="GO" id="GO:0005840">
    <property type="term" value="C:ribosome"/>
    <property type="evidence" value="ECO:0007669"/>
    <property type="project" value="UniProtKB-KW"/>
</dbReference>
<dbReference type="GO" id="GO:0019843">
    <property type="term" value="F:rRNA binding"/>
    <property type="evidence" value="ECO:0007669"/>
    <property type="project" value="UniProtKB-UniRule"/>
</dbReference>
<dbReference type="GO" id="GO:0003735">
    <property type="term" value="F:structural constituent of ribosome"/>
    <property type="evidence" value="ECO:0007669"/>
    <property type="project" value="InterPro"/>
</dbReference>
<dbReference type="GO" id="GO:0006412">
    <property type="term" value="P:translation"/>
    <property type="evidence" value="ECO:0007669"/>
    <property type="project" value="UniProtKB-UniRule"/>
</dbReference>
<dbReference type="FunFam" id="3.30.1370.30:FF:000002">
    <property type="entry name" value="30S ribosomal protein S8"/>
    <property type="match status" value="1"/>
</dbReference>
<dbReference type="FunFam" id="3.30.1490.10:FF:000001">
    <property type="entry name" value="30S ribosomal protein S8"/>
    <property type="match status" value="1"/>
</dbReference>
<dbReference type="Gene3D" id="3.30.1370.30">
    <property type="match status" value="1"/>
</dbReference>
<dbReference type="Gene3D" id="3.30.1490.10">
    <property type="match status" value="1"/>
</dbReference>
<dbReference type="HAMAP" id="MF_01302_B">
    <property type="entry name" value="Ribosomal_uS8_B"/>
    <property type="match status" value="1"/>
</dbReference>
<dbReference type="InterPro" id="IPR000630">
    <property type="entry name" value="Ribosomal_uS8"/>
</dbReference>
<dbReference type="InterPro" id="IPR047863">
    <property type="entry name" value="Ribosomal_uS8_CS"/>
</dbReference>
<dbReference type="InterPro" id="IPR035987">
    <property type="entry name" value="Ribosomal_uS8_sf"/>
</dbReference>
<dbReference type="NCBIfam" id="NF001109">
    <property type="entry name" value="PRK00136.1"/>
    <property type="match status" value="1"/>
</dbReference>
<dbReference type="PANTHER" id="PTHR11758">
    <property type="entry name" value="40S RIBOSOMAL PROTEIN S15A"/>
    <property type="match status" value="1"/>
</dbReference>
<dbReference type="Pfam" id="PF00410">
    <property type="entry name" value="Ribosomal_S8"/>
    <property type="match status" value="1"/>
</dbReference>
<dbReference type="SUPFAM" id="SSF56047">
    <property type="entry name" value="Ribosomal protein S8"/>
    <property type="match status" value="1"/>
</dbReference>
<dbReference type="PROSITE" id="PS00053">
    <property type="entry name" value="RIBOSOMAL_S8"/>
    <property type="match status" value="1"/>
</dbReference>
<feature type="chain" id="PRO_0000290961" description="Small ribosomal subunit protein uS8">
    <location>
        <begin position="1"/>
        <end position="132"/>
    </location>
</feature>